<evidence type="ECO:0000255" key="1">
    <source>
        <dbReference type="HAMAP-Rule" id="MF_01309"/>
    </source>
</evidence>
<evidence type="ECO:0000256" key="2">
    <source>
        <dbReference type="SAM" id="MobiDB-lite"/>
    </source>
</evidence>
<evidence type="ECO:0000305" key="3"/>
<name>RS3_HALMA</name>
<reference key="1">
    <citation type="journal article" date="1990" name="J. Biol. Chem.">
        <title>Organization and nucleotide sequence of a gene cluster coding for eight ribosomal proteins in the archaebacterium Halobacterium marismortui.</title>
        <authorList>
            <person name="Arndt E."/>
            <person name="Kroemer W."/>
            <person name="Hatakeyama T."/>
        </authorList>
    </citation>
    <scope>NUCLEOTIDE SEQUENCE [GENOMIC DNA]</scope>
</reference>
<reference key="2">
    <citation type="journal article" date="2004" name="Genome Res.">
        <title>Genome sequence of Haloarcula marismortui: a halophilic archaeon from the Dead Sea.</title>
        <authorList>
            <person name="Baliga N.S."/>
            <person name="Bonneau R."/>
            <person name="Facciotti M.T."/>
            <person name="Pan M."/>
            <person name="Glusman G."/>
            <person name="Deutsch E.W."/>
            <person name="Shannon P."/>
            <person name="Chiu Y."/>
            <person name="Weng R.S."/>
            <person name="Gan R.R."/>
            <person name="Hung P."/>
            <person name="Date S.V."/>
            <person name="Marcotte E."/>
            <person name="Hood L."/>
            <person name="Ng W.V."/>
        </authorList>
    </citation>
    <scope>NUCLEOTIDE SEQUENCE [LARGE SCALE GENOMIC DNA]</scope>
    <source>
        <strain>ATCC 43049 / DSM 3752 / JCM 8966 / VKM B-1809</strain>
    </source>
</reference>
<keyword id="KW-1185">Reference proteome</keyword>
<keyword id="KW-0687">Ribonucleoprotein</keyword>
<keyword id="KW-0689">Ribosomal protein</keyword>
<keyword id="KW-0694">RNA-binding</keyword>
<keyword id="KW-0699">rRNA-binding</keyword>
<protein>
    <recommendedName>
        <fullName evidence="1">Small ribosomal subunit protein uS3</fullName>
    </recommendedName>
    <alternativeName>
        <fullName evidence="3">30S ribosomal protein S3</fullName>
    </alternativeName>
    <alternativeName>
        <fullName>HS1</fullName>
    </alternativeName>
    <alternativeName>
        <fullName>HmaS3</fullName>
    </alternativeName>
</protein>
<feature type="chain" id="PRO_0000130247" description="Small ribosomal subunit protein uS3">
    <location>
        <begin position="1"/>
        <end position="304"/>
    </location>
</feature>
<feature type="domain" description="KH type-2" evidence="1">
    <location>
        <begin position="17"/>
        <end position="86"/>
    </location>
</feature>
<feature type="region of interest" description="Disordered" evidence="2">
    <location>
        <begin position="216"/>
        <end position="304"/>
    </location>
</feature>
<feature type="sequence conflict" description="In Ref. 1; AAA86865." evidence="3" ref="1">
    <original>D</original>
    <variation>H</variation>
    <location>
        <position position="263"/>
    </location>
</feature>
<comment type="function">
    <text evidence="1">Binds the lower part of the 30S subunit head.</text>
</comment>
<comment type="subunit">
    <text evidence="1">Part of the 30S ribosomal subunit.</text>
</comment>
<comment type="similarity">
    <text evidence="1">Belongs to the universal ribosomal protein uS3 family.</text>
</comment>
<accession>P20281</accession>
<accession>Q5V1T0</accession>
<sequence>MADEQQFIEDGLQRTQIDEFFAEELGRAGYGGMDVAKTPMGTQIVLKAEKPGMVIGKGGKNIRKITTELEDRFNLDDPQVDVQEVDEPDLNARIVADRLANALERGWYFRKAGHTTIDRIMESGALGAEIVLSGKVTGARSRVEKFNRGYVKHNGEPAEEIVDSGVGVAVMKLGTIGVRVKIIPPNAELPDDFEIYEDVDVEDYVADTDGESVEELLEGEPEDSETAEELDEDVAAGADDDSEADEEFVDEEIVEEDVEVPTDDDVEDVDVDELEEAVDEELDEDVEAEAEELMDEMDEEGDDE</sequence>
<organism>
    <name type="scientific">Haloarcula marismortui (strain ATCC 43049 / DSM 3752 / JCM 8966 / VKM B-1809)</name>
    <name type="common">Halobacterium marismortui</name>
    <dbReference type="NCBI Taxonomy" id="272569"/>
    <lineage>
        <taxon>Archaea</taxon>
        <taxon>Methanobacteriati</taxon>
        <taxon>Methanobacteriota</taxon>
        <taxon>Stenosarchaea group</taxon>
        <taxon>Halobacteria</taxon>
        <taxon>Halobacteriales</taxon>
        <taxon>Haloarculaceae</taxon>
        <taxon>Haloarcula</taxon>
    </lineage>
</organism>
<dbReference type="EMBL" id="J05222">
    <property type="protein sequence ID" value="AAA86865.1"/>
    <property type="molecule type" value="Genomic_DNA"/>
</dbReference>
<dbReference type="EMBL" id="AY596297">
    <property type="protein sequence ID" value="AAV46522.1"/>
    <property type="molecule type" value="Genomic_DNA"/>
</dbReference>
<dbReference type="PIR" id="I35063">
    <property type="entry name" value="R3HS3S"/>
</dbReference>
<dbReference type="RefSeq" id="WP_004957404.1">
    <property type="nucleotide sequence ID" value="NZ_CP039138.1"/>
</dbReference>
<dbReference type="SMR" id="P20281"/>
<dbReference type="STRING" id="272569.rrnAC1605"/>
<dbReference type="PaxDb" id="272569-rrnAC1605"/>
<dbReference type="EnsemblBacteria" id="AAV46522">
    <property type="protein sequence ID" value="AAV46522"/>
    <property type="gene ID" value="rrnAC1605"/>
</dbReference>
<dbReference type="KEGG" id="hma:rrnAC1605"/>
<dbReference type="PATRIC" id="fig|272569.17.peg.2295"/>
<dbReference type="eggNOG" id="arCOG04097">
    <property type="taxonomic scope" value="Archaea"/>
</dbReference>
<dbReference type="HOGENOM" id="CLU_058591_1_0_2"/>
<dbReference type="Proteomes" id="UP000001169">
    <property type="component" value="Chromosome I"/>
</dbReference>
<dbReference type="GO" id="GO:0022627">
    <property type="term" value="C:cytosolic small ribosomal subunit"/>
    <property type="evidence" value="ECO:0007669"/>
    <property type="project" value="TreeGrafter"/>
</dbReference>
<dbReference type="GO" id="GO:0019843">
    <property type="term" value="F:rRNA binding"/>
    <property type="evidence" value="ECO:0007669"/>
    <property type="project" value="UniProtKB-UniRule"/>
</dbReference>
<dbReference type="GO" id="GO:0003735">
    <property type="term" value="F:structural constituent of ribosome"/>
    <property type="evidence" value="ECO:0007669"/>
    <property type="project" value="InterPro"/>
</dbReference>
<dbReference type="GO" id="GO:0006412">
    <property type="term" value="P:translation"/>
    <property type="evidence" value="ECO:0007669"/>
    <property type="project" value="UniProtKB-UniRule"/>
</dbReference>
<dbReference type="CDD" id="cd02411">
    <property type="entry name" value="KH-II_30S_S3_arch"/>
    <property type="match status" value="1"/>
</dbReference>
<dbReference type="FunFam" id="3.30.1140.32:FF:000012">
    <property type="entry name" value="30S ribosomal protein S3"/>
    <property type="match status" value="1"/>
</dbReference>
<dbReference type="FunFam" id="3.30.300.20:FF:000001">
    <property type="entry name" value="30S ribosomal protein S3"/>
    <property type="match status" value="1"/>
</dbReference>
<dbReference type="Gene3D" id="3.30.300.20">
    <property type="match status" value="1"/>
</dbReference>
<dbReference type="Gene3D" id="3.30.1140.32">
    <property type="entry name" value="Ribosomal protein S3, C-terminal domain"/>
    <property type="match status" value="1"/>
</dbReference>
<dbReference type="HAMAP" id="MF_01309_A">
    <property type="entry name" value="Ribosomal_uS3_A"/>
    <property type="match status" value="1"/>
</dbReference>
<dbReference type="InterPro" id="IPR004087">
    <property type="entry name" value="KH_dom"/>
</dbReference>
<dbReference type="InterPro" id="IPR015946">
    <property type="entry name" value="KH_dom-like_a/b"/>
</dbReference>
<dbReference type="InterPro" id="IPR004044">
    <property type="entry name" value="KH_dom_type_2"/>
</dbReference>
<dbReference type="InterPro" id="IPR009019">
    <property type="entry name" value="KH_sf_prok-type"/>
</dbReference>
<dbReference type="InterPro" id="IPR036419">
    <property type="entry name" value="Ribosomal_S3_C_sf"/>
</dbReference>
<dbReference type="InterPro" id="IPR027488">
    <property type="entry name" value="Ribosomal_uS3_arc"/>
</dbReference>
<dbReference type="InterPro" id="IPR001351">
    <property type="entry name" value="Ribosomal_uS3_C"/>
</dbReference>
<dbReference type="InterPro" id="IPR018280">
    <property type="entry name" value="Ribosomal_uS3_CS"/>
</dbReference>
<dbReference type="InterPro" id="IPR005703">
    <property type="entry name" value="Ribosomal_uS3_euk/arc"/>
</dbReference>
<dbReference type="NCBIfam" id="NF003219">
    <property type="entry name" value="PRK04191.1"/>
    <property type="match status" value="1"/>
</dbReference>
<dbReference type="NCBIfam" id="TIGR01008">
    <property type="entry name" value="uS3_euk_arch"/>
    <property type="match status" value="1"/>
</dbReference>
<dbReference type="PANTHER" id="PTHR11760">
    <property type="entry name" value="30S/40S RIBOSOMAL PROTEIN S3"/>
    <property type="match status" value="1"/>
</dbReference>
<dbReference type="PANTHER" id="PTHR11760:SF32">
    <property type="entry name" value="SMALL RIBOSOMAL SUBUNIT PROTEIN US3"/>
    <property type="match status" value="1"/>
</dbReference>
<dbReference type="Pfam" id="PF07650">
    <property type="entry name" value="KH_2"/>
    <property type="match status" value="1"/>
</dbReference>
<dbReference type="Pfam" id="PF00189">
    <property type="entry name" value="Ribosomal_S3_C"/>
    <property type="match status" value="1"/>
</dbReference>
<dbReference type="SMART" id="SM00322">
    <property type="entry name" value="KH"/>
    <property type="match status" value="1"/>
</dbReference>
<dbReference type="SUPFAM" id="SSF54814">
    <property type="entry name" value="Prokaryotic type KH domain (KH-domain type II)"/>
    <property type="match status" value="1"/>
</dbReference>
<dbReference type="SUPFAM" id="SSF54821">
    <property type="entry name" value="Ribosomal protein S3 C-terminal domain"/>
    <property type="match status" value="1"/>
</dbReference>
<dbReference type="PROSITE" id="PS50823">
    <property type="entry name" value="KH_TYPE_2"/>
    <property type="match status" value="1"/>
</dbReference>
<dbReference type="PROSITE" id="PS00548">
    <property type="entry name" value="RIBOSOMAL_S3"/>
    <property type="match status" value="1"/>
</dbReference>
<gene>
    <name evidence="1" type="primary">rps3</name>
    <name type="ordered locus">rrnAC1605</name>
</gene>
<proteinExistence type="inferred from homology"/>